<protein>
    <recommendedName>
        <fullName evidence="1">Biotin synthase</fullName>
        <ecNumber evidence="1">2.8.1.6</ecNumber>
    </recommendedName>
</protein>
<proteinExistence type="inferred from homology"/>
<gene>
    <name evidence="1" type="primary">bioB</name>
    <name type="ordered locus">SYO3AOP1_0604</name>
</gene>
<accession>B2V8G9</accession>
<dbReference type="EC" id="2.8.1.6" evidence="1"/>
<dbReference type="EMBL" id="CP001080">
    <property type="protein sequence ID" value="ACD66242.1"/>
    <property type="molecule type" value="Genomic_DNA"/>
</dbReference>
<dbReference type="RefSeq" id="WP_012459321.1">
    <property type="nucleotide sequence ID" value="NC_010730.1"/>
</dbReference>
<dbReference type="SMR" id="B2V8G9"/>
<dbReference type="STRING" id="436114.SYO3AOP1_0604"/>
<dbReference type="KEGG" id="sul:SYO3AOP1_0604"/>
<dbReference type="eggNOG" id="COG0502">
    <property type="taxonomic scope" value="Bacteria"/>
</dbReference>
<dbReference type="HOGENOM" id="CLU_033172_2_1_0"/>
<dbReference type="UniPathway" id="UPA00078">
    <property type="reaction ID" value="UER00162"/>
</dbReference>
<dbReference type="GO" id="GO:0051537">
    <property type="term" value="F:2 iron, 2 sulfur cluster binding"/>
    <property type="evidence" value="ECO:0007669"/>
    <property type="project" value="UniProtKB-KW"/>
</dbReference>
<dbReference type="GO" id="GO:0051539">
    <property type="term" value="F:4 iron, 4 sulfur cluster binding"/>
    <property type="evidence" value="ECO:0007669"/>
    <property type="project" value="UniProtKB-KW"/>
</dbReference>
<dbReference type="GO" id="GO:0004076">
    <property type="term" value="F:biotin synthase activity"/>
    <property type="evidence" value="ECO:0007669"/>
    <property type="project" value="UniProtKB-UniRule"/>
</dbReference>
<dbReference type="GO" id="GO:0005506">
    <property type="term" value="F:iron ion binding"/>
    <property type="evidence" value="ECO:0007669"/>
    <property type="project" value="UniProtKB-UniRule"/>
</dbReference>
<dbReference type="GO" id="GO:0009102">
    <property type="term" value="P:biotin biosynthetic process"/>
    <property type="evidence" value="ECO:0007669"/>
    <property type="project" value="UniProtKB-UniRule"/>
</dbReference>
<dbReference type="CDD" id="cd01335">
    <property type="entry name" value="Radical_SAM"/>
    <property type="match status" value="1"/>
</dbReference>
<dbReference type="FunFam" id="3.20.20.70:FF:000026">
    <property type="entry name" value="Biotin synthase"/>
    <property type="match status" value="1"/>
</dbReference>
<dbReference type="Gene3D" id="3.20.20.70">
    <property type="entry name" value="Aldolase class I"/>
    <property type="match status" value="1"/>
</dbReference>
<dbReference type="HAMAP" id="MF_01694">
    <property type="entry name" value="BioB"/>
    <property type="match status" value="1"/>
</dbReference>
<dbReference type="InterPro" id="IPR013785">
    <property type="entry name" value="Aldolase_TIM"/>
</dbReference>
<dbReference type="InterPro" id="IPR010722">
    <property type="entry name" value="BATS_dom"/>
</dbReference>
<dbReference type="InterPro" id="IPR002684">
    <property type="entry name" value="Biotin_synth/BioAB"/>
</dbReference>
<dbReference type="InterPro" id="IPR024177">
    <property type="entry name" value="Biotin_synthase"/>
</dbReference>
<dbReference type="InterPro" id="IPR006638">
    <property type="entry name" value="Elp3/MiaA/NifB-like_rSAM"/>
</dbReference>
<dbReference type="InterPro" id="IPR007197">
    <property type="entry name" value="rSAM"/>
</dbReference>
<dbReference type="NCBIfam" id="TIGR00433">
    <property type="entry name" value="bioB"/>
    <property type="match status" value="1"/>
</dbReference>
<dbReference type="PANTHER" id="PTHR22976">
    <property type="entry name" value="BIOTIN SYNTHASE"/>
    <property type="match status" value="1"/>
</dbReference>
<dbReference type="PANTHER" id="PTHR22976:SF2">
    <property type="entry name" value="BIOTIN SYNTHASE, MITOCHONDRIAL"/>
    <property type="match status" value="1"/>
</dbReference>
<dbReference type="Pfam" id="PF06968">
    <property type="entry name" value="BATS"/>
    <property type="match status" value="1"/>
</dbReference>
<dbReference type="Pfam" id="PF04055">
    <property type="entry name" value="Radical_SAM"/>
    <property type="match status" value="1"/>
</dbReference>
<dbReference type="PIRSF" id="PIRSF001619">
    <property type="entry name" value="Biotin_synth"/>
    <property type="match status" value="1"/>
</dbReference>
<dbReference type="SFLD" id="SFLDG01278">
    <property type="entry name" value="biotin_synthase_like"/>
    <property type="match status" value="1"/>
</dbReference>
<dbReference type="SFLD" id="SFLDS00029">
    <property type="entry name" value="Radical_SAM"/>
    <property type="match status" value="1"/>
</dbReference>
<dbReference type="SMART" id="SM00876">
    <property type="entry name" value="BATS"/>
    <property type="match status" value="1"/>
</dbReference>
<dbReference type="SMART" id="SM00729">
    <property type="entry name" value="Elp3"/>
    <property type="match status" value="1"/>
</dbReference>
<dbReference type="SUPFAM" id="SSF102114">
    <property type="entry name" value="Radical SAM enzymes"/>
    <property type="match status" value="1"/>
</dbReference>
<dbReference type="PROSITE" id="PS51918">
    <property type="entry name" value="RADICAL_SAM"/>
    <property type="match status" value="1"/>
</dbReference>
<comment type="function">
    <text evidence="1">Catalyzes the conversion of dethiobiotin (DTB) to biotin by the insertion of a sulfur atom into dethiobiotin via a radical-based mechanism.</text>
</comment>
<comment type="catalytic activity">
    <reaction evidence="1">
        <text>(4R,5S)-dethiobiotin + (sulfur carrier)-SH + 2 reduced [2Fe-2S]-[ferredoxin] + 2 S-adenosyl-L-methionine = (sulfur carrier)-H + biotin + 2 5'-deoxyadenosine + 2 L-methionine + 2 oxidized [2Fe-2S]-[ferredoxin]</text>
        <dbReference type="Rhea" id="RHEA:22060"/>
        <dbReference type="Rhea" id="RHEA-COMP:10000"/>
        <dbReference type="Rhea" id="RHEA-COMP:10001"/>
        <dbReference type="Rhea" id="RHEA-COMP:14737"/>
        <dbReference type="Rhea" id="RHEA-COMP:14739"/>
        <dbReference type="ChEBI" id="CHEBI:17319"/>
        <dbReference type="ChEBI" id="CHEBI:29917"/>
        <dbReference type="ChEBI" id="CHEBI:33737"/>
        <dbReference type="ChEBI" id="CHEBI:33738"/>
        <dbReference type="ChEBI" id="CHEBI:57586"/>
        <dbReference type="ChEBI" id="CHEBI:57844"/>
        <dbReference type="ChEBI" id="CHEBI:59789"/>
        <dbReference type="ChEBI" id="CHEBI:64428"/>
        <dbReference type="ChEBI" id="CHEBI:149473"/>
        <dbReference type="EC" id="2.8.1.6"/>
    </reaction>
</comment>
<comment type="cofactor">
    <cofactor evidence="1">
        <name>[4Fe-4S] cluster</name>
        <dbReference type="ChEBI" id="CHEBI:49883"/>
    </cofactor>
    <text evidence="1">Binds 1 [4Fe-4S] cluster. The cluster is coordinated with 3 cysteines and an exchangeable S-adenosyl-L-methionine.</text>
</comment>
<comment type="cofactor">
    <cofactor evidence="1">
        <name>[2Fe-2S] cluster</name>
        <dbReference type="ChEBI" id="CHEBI:190135"/>
    </cofactor>
    <text evidence="1">Binds 1 [2Fe-2S] cluster. The cluster is coordinated with 3 cysteines and 1 arginine.</text>
</comment>
<comment type="pathway">
    <text evidence="1">Cofactor biosynthesis; biotin biosynthesis; biotin from 7,8-diaminononanoate: step 2/2.</text>
</comment>
<comment type="subunit">
    <text evidence="1">Homodimer.</text>
</comment>
<comment type="similarity">
    <text evidence="1">Belongs to the radical SAM superfamily. Biotin synthase family.</text>
</comment>
<sequence length="333" mass="37162">MEILNNLAERVISGEKLTKEEGLQILSIPDELVMDLVEEASKVRKYFFKNQMEFCSLINAKNGACTEDCSFCAQSSHYKTPINAYGLVSKDEMLAGAEKAVAINANRYCIVVSGRKASKEEVDKIADAIKEIKKTYPIKVCCSLGTVDEKDLDKLKVAGVDRINHNLETSEKYFSKIVSTHTWKERYKTIKKIQKVGLSTCTGGIFGMGESDEDIIDLAMTYRDLEVDSIPLNFLIPIPGTPLGDKHNLTPLRCLKIIALFRLFNPKSEIRLCGGRELNLKDYHDIAFEVANCLMAGGYLTRAGREPGKDEEMARRLGRELIKNGASFSVSNE</sequence>
<keyword id="KW-0001">2Fe-2S</keyword>
<keyword id="KW-0004">4Fe-4S</keyword>
<keyword id="KW-0093">Biotin biosynthesis</keyword>
<keyword id="KW-0408">Iron</keyword>
<keyword id="KW-0411">Iron-sulfur</keyword>
<keyword id="KW-0479">Metal-binding</keyword>
<keyword id="KW-0949">S-adenosyl-L-methionine</keyword>
<keyword id="KW-0808">Transferase</keyword>
<name>BIOB_SULSY</name>
<organism>
    <name type="scientific">Sulfurihydrogenibium sp. (strain YO3AOP1)</name>
    <dbReference type="NCBI Taxonomy" id="436114"/>
    <lineage>
        <taxon>Bacteria</taxon>
        <taxon>Pseudomonadati</taxon>
        <taxon>Aquificota</taxon>
        <taxon>Aquificia</taxon>
        <taxon>Aquificales</taxon>
        <taxon>Hydrogenothermaceae</taxon>
        <taxon>Sulfurihydrogenibium</taxon>
    </lineage>
</organism>
<feature type="chain" id="PRO_0000381670" description="Biotin synthase">
    <location>
        <begin position="1"/>
        <end position="333"/>
    </location>
</feature>
<feature type="domain" description="Radical SAM core" evidence="2">
    <location>
        <begin position="47"/>
        <end position="276"/>
    </location>
</feature>
<feature type="binding site" evidence="1">
    <location>
        <position position="65"/>
    </location>
    <ligand>
        <name>[4Fe-4S] cluster</name>
        <dbReference type="ChEBI" id="CHEBI:49883"/>
        <note>4Fe-4S-S-AdoMet</note>
    </ligand>
</feature>
<feature type="binding site" evidence="1">
    <location>
        <position position="69"/>
    </location>
    <ligand>
        <name>[4Fe-4S] cluster</name>
        <dbReference type="ChEBI" id="CHEBI:49883"/>
        <note>4Fe-4S-S-AdoMet</note>
    </ligand>
</feature>
<feature type="binding site" evidence="1">
    <location>
        <position position="72"/>
    </location>
    <ligand>
        <name>[4Fe-4S] cluster</name>
        <dbReference type="ChEBI" id="CHEBI:49883"/>
        <note>4Fe-4S-S-AdoMet</note>
    </ligand>
</feature>
<feature type="binding site" evidence="1">
    <location>
        <position position="109"/>
    </location>
    <ligand>
        <name>[2Fe-2S] cluster</name>
        <dbReference type="ChEBI" id="CHEBI:190135"/>
    </ligand>
</feature>
<feature type="binding site" evidence="1">
    <location>
        <position position="141"/>
    </location>
    <ligand>
        <name>[2Fe-2S] cluster</name>
        <dbReference type="ChEBI" id="CHEBI:190135"/>
    </ligand>
</feature>
<feature type="binding site" evidence="1">
    <location>
        <position position="201"/>
    </location>
    <ligand>
        <name>[2Fe-2S] cluster</name>
        <dbReference type="ChEBI" id="CHEBI:190135"/>
    </ligand>
</feature>
<feature type="binding site" evidence="1">
    <location>
        <position position="271"/>
    </location>
    <ligand>
        <name>[2Fe-2S] cluster</name>
        <dbReference type="ChEBI" id="CHEBI:190135"/>
    </ligand>
</feature>
<evidence type="ECO:0000255" key="1">
    <source>
        <dbReference type="HAMAP-Rule" id="MF_01694"/>
    </source>
</evidence>
<evidence type="ECO:0000255" key="2">
    <source>
        <dbReference type="PROSITE-ProRule" id="PRU01266"/>
    </source>
</evidence>
<reference key="1">
    <citation type="journal article" date="2009" name="J. Bacteriol.">
        <title>Complete and draft genome sequences of six members of the Aquificales.</title>
        <authorList>
            <person name="Reysenbach A.-L."/>
            <person name="Hamamura N."/>
            <person name="Podar M."/>
            <person name="Griffiths E."/>
            <person name="Ferreira S."/>
            <person name="Hochstein R."/>
            <person name="Heidelberg J."/>
            <person name="Johnson J."/>
            <person name="Mead D."/>
            <person name="Pohorille A."/>
            <person name="Sarmiento M."/>
            <person name="Schweighofer K."/>
            <person name="Seshadri R."/>
            <person name="Voytek M.A."/>
        </authorList>
    </citation>
    <scope>NUCLEOTIDE SEQUENCE [LARGE SCALE GENOMIC DNA]</scope>
    <source>
        <strain>YO3AOP1</strain>
    </source>
</reference>